<dbReference type="EC" id="7.1.2.2" evidence="1"/>
<dbReference type="EMBL" id="DQ489736">
    <property type="protein sequence ID" value="ACA83452.1"/>
    <property type="molecule type" value="Genomic_DNA"/>
</dbReference>
<dbReference type="RefSeq" id="WP_004904999.1">
    <property type="nucleotide sequence ID" value="NC_010471.1"/>
</dbReference>
<dbReference type="SMR" id="B1MW87"/>
<dbReference type="STRING" id="349519.LCK_01629"/>
<dbReference type="GeneID" id="61103187"/>
<dbReference type="KEGG" id="lci:LCK_01629"/>
<dbReference type="eggNOG" id="COG0056">
    <property type="taxonomic scope" value="Bacteria"/>
</dbReference>
<dbReference type="HOGENOM" id="CLU_010091_2_1_9"/>
<dbReference type="OrthoDB" id="9803053at2"/>
<dbReference type="Proteomes" id="UP000002166">
    <property type="component" value="Chromosome"/>
</dbReference>
<dbReference type="GO" id="GO:0005886">
    <property type="term" value="C:plasma membrane"/>
    <property type="evidence" value="ECO:0007669"/>
    <property type="project" value="UniProtKB-SubCell"/>
</dbReference>
<dbReference type="GO" id="GO:0045259">
    <property type="term" value="C:proton-transporting ATP synthase complex"/>
    <property type="evidence" value="ECO:0007669"/>
    <property type="project" value="UniProtKB-KW"/>
</dbReference>
<dbReference type="GO" id="GO:0043531">
    <property type="term" value="F:ADP binding"/>
    <property type="evidence" value="ECO:0007669"/>
    <property type="project" value="TreeGrafter"/>
</dbReference>
<dbReference type="GO" id="GO:0005524">
    <property type="term" value="F:ATP binding"/>
    <property type="evidence" value="ECO:0007669"/>
    <property type="project" value="UniProtKB-UniRule"/>
</dbReference>
<dbReference type="GO" id="GO:0046933">
    <property type="term" value="F:proton-transporting ATP synthase activity, rotational mechanism"/>
    <property type="evidence" value="ECO:0007669"/>
    <property type="project" value="UniProtKB-UniRule"/>
</dbReference>
<dbReference type="CDD" id="cd18113">
    <property type="entry name" value="ATP-synt_F1_alpha_C"/>
    <property type="match status" value="1"/>
</dbReference>
<dbReference type="CDD" id="cd18116">
    <property type="entry name" value="ATP-synt_F1_alpha_N"/>
    <property type="match status" value="1"/>
</dbReference>
<dbReference type="CDD" id="cd01132">
    <property type="entry name" value="F1-ATPase_alpha_CD"/>
    <property type="match status" value="1"/>
</dbReference>
<dbReference type="FunFam" id="1.20.150.20:FF:000001">
    <property type="entry name" value="ATP synthase subunit alpha"/>
    <property type="match status" value="1"/>
</dbReference>
<dbReference type="FunFam" id="2.40.30.20:FF:000001">
    <property type="entry name" value="ATP synthase subunit alpha"/>
    <property type="match status" value="1"/>
</dbReference>
<dbReference type="FunFam" id="3.40.50.300:FF:000002">
    <property type="entry name" value="ATP synthase subunit alpha"/>
    <property type="match status" value="1"/>
</dbReference>
<dbReference type="Gene3D" id="2.40.30.20">
    <property type="match status" value="1"/>
</dbReference>
<dbReference type="Gene3D" id="1.20.150.20">
    <property type="entry name" value="ATP synthase alpha/beta chain, C-terminal domain"/>
    <property type="match status" value="1"/>
</dbReference>
<dbReference type="Gene3D" id="3.40.50.300">
    <property type="entry name" value="P-loop containing nucleotide triphosphate hydrolases"/>
    <property type="match status" value="1"/>
</dbReference>
<dbReference type="HAMAP" id="MF_01346">
    <property type="entry name" value="ATP_synth_alpha_bact"/>
    <property type="match status" value="1"/>
</dbReference>
<dbReference type="InterPro" id="IPR023366">
    <property type="entry name" value="ATP_synth_asu-like_sf"/>
</dbReference>
<dbReference type="InterPro" id="IPR000793">
    <property type="entry name" value="ATP_synth_asu_C"/>
</dbReference>
<dbReference type="InterPro" id="IPR038376">
    <property type="entry name" value="ATP_synth_asu_C_sf"/>
</dbReference>
<dbReference type="InterPro" id="IPR033732">
    <property type="entry name" value="ATP_synth_F1_a_nt-bd_dom"/>
</dbReference>
<dbReference type="InterPro" id="IPR005294">
    <property type="entry name" value="ATP_synth_F1_asu"/>
</dbReference>
<dbReference type="InterPro" id="IPR020003">
    <property type="entry name" value="ATPase_a/bsu_AS"/>
</dbReference>
<dbReference type="InterPro" id="IPR004100">
    <property type="entry name" value="ATPase_F1/V1/A1_a/bsu_N"/>
</dbReference>
<dbReference type="InterPro" id="IPR036121">
    <property type="entry name" value="ATPase_F1/V1/A1_a/bsu_N_sf"/>
</dbReference>
<dbReference type="InterPro" id="IPR000194">
    <property type="entry name" value="ATPase_F1/V1/A1_a/bsu_nucl-bd"/>
</dbReference>
<dbReference type="InterPro" id="IPR027417">
    <property type="entry name" value="P-loop_NTPase"/>
</dbReference>
<dbReference type="NCBIfam" id="TIGR00962">
    <property type="entry name" value="atpA"/>
    <property type="match status" value="1"/>
</dbReference>
<dbReference type="NCBIfam" id="NF009884">
    <property type="entry name" value="PRK13343.1"/>
    <property type="match status" value="1"/>
</dbReference>
<dbReference type="PANTHER" id="PTHR48082">
    <property type="entry name" value="ATP SYNTHASE SUBUNIT ALPHA, MITOCHONDRIAL"/>
    <property type="match status" value="1"/>
</dbReference>
<dbReference type="PANTHER" id="PTHR48082:SF2">
    <property type="entry name" value="ATP SYNTHASE SUBUNIT ALPHA, MITOCHONDRIAL"/>
    <property type="match status" value="1"/>
</dbReference>
<dbReference type="Pfam" id="PF00006">
    <property type="entry name" value="ATP-synt_ab"/>
    <property type="match status" value="1"/>
</dbReference>
<dbReference type="Pfam" id="PF00306">
    <property type="entry name" value="ATP-synt_ab_C"/>
    <property type="match status" value="1"/>
</dbReference>
<dbReference type="Pfam" id="PF02874">
    <property type="entry name" value="ATP-synt_ab_N"/>
    <property type="match status" value="1"/>
</dbReference>
<dbReference type="PIRSF" id="PIRSF039088">
    <property type="entry name" value="F_ATPase_subunit_alpha"/>
    <property type="match status" value="1"/>
</dbReference>
<dbReference type="SUPFAM" id="SSF47917">
    <property type="entry name" value="C-terminal domain of alpha and beta subunits of F1 ATP synthase"/>
    <property type="match status" value="1"/>
</dbReference>
<dbReference type="SUPFAM" id="SSF50615">
    <property type="entry name" value="N-terminal domain of alpha and beta subunits of F1 ATP synthase"/>
    <property type="match status" value="1"/>
</dbReference>
<dbReference type="SUPFAM" id="SSF52540">
    <property type="entry name" value="P-loop containing nucleoside triphosphate hydrolases"/>
    <property type="match status" value="1"/>
</dbReference>
<dbReference type="PROSITE" id="PS00152">
    <property type="entry name" value="ATPASE_ALPHA_BETA"/>
    <property type="match status" value="1"/>
</dbReference>
<protein>
    <recommendedName>
        <fullName evidence="1">ATP synthase subunit alpha</fullName>
        <ecNumber evidence="1">7.1.2.2</ecNumber>
    </recommendedName>
    <alternativeName>
        <fullName evidence="1">ATP synthase F1 sector subunit alpha</fullName>
    </alternativeName>
    <alternativeName>
        <fullName evidence="1">F-ATPase subunit alpha</fullName>
    </alternativeName>
</protein>
<organism>
    <name type="scientific">Leuconostoc citreum (strain KM20)</name>
    <dbReference type="NCBI Taxonomy" id="349519"/>
    <lineage>
        <taxon>Bacteria</taxon>
        <taxon>Bacillati</taxon>
        <taxon>Bacillota</taxon>
        <taxon>Bacilli</taxon>
        <taxon>Lactobacillales</taxon>
        <taxon>Lactobacillaceae</taxon>
        <taxon>Leuconostoc</taxon>
    </lineage>
</organism>
<gene>
    <name evidence="1" type="primary">atpA</name>
    <name type="ordered locus">LCK_01629</name>
</gene>
<comment type="function">
    <text evidence="1">Produces ATP from ADP in the presence of a proton gradient across the membrane. The alpha chain is a regulatory subunit.</text>
</comment>
<comment type="catalytic activity">
    <reaction evidence="1">
        <text>ATP + H2O + 4 H(+)(in) = ADP + phosphate + 5 H(+)(out)</text>
        <dbReference type="Rhea" id="RHEA:57720"/>
        <dbReference type="ChEBI" id="CHEBI:15377"/>
        <dbReference type="ChEBI" id="CHEBI:15378"/>
        <dbReference type="ChEBI" id="CHEBI:30616"/>
        <dbReference type="ChEBI" id="CHEBI:43474"/>
        <dbReference type="ChEBI" id="CHEBI:456216"/>
        <dbReference type="EC" id="7.1.2.2"/>
    </reaction>
</comment>
<comment type="subunit">
    <text evidence="1">F-type ATPases have 2 components, CF(1) - the catalytic core - and CF(0) - the membrane proton channel. CF(1) has five subunits: alpha(3), beta(3), gamma(1), delta(1), epsilon(1). CF(0) has three main subunits: a(1), b(2) and c(9-12). The alpha and beta chains form an alternating ring which encloses part of the gamma chain. CF(1) is attached to CF(0) by a central stalk formed by the gamma and epsilon chains, while a peripheral stalk is formed by the delta and b chains.</text>
</comment>
<comment type="subcellular location">
    <subcellularLocation>
        <location evidence="1">Cell membrane</location>
        <topology evidence="1">Peripheral membrane protein</topology>
    </subcellularLocation>
</comment>
<comment type="similarity">
    <text evidence="1">Belongs to the ATPase alpha/beta chains family.</text>
</comment>
<proteinExistence type="inferred from homology"/>
<keyword id="KW-0066">ATP synthesis</keyword>
<keyword id="KW-0067">ATP-binding</keyword>
<keyword id="KW-1003">Cell membrane</keyword>
<keyword id="KW-0139">CF(1)</keyword>
<keyword id="KW-0375">Hydrogen ion transport</keyword>
<keyword id="KW-0406">Ion transport</keyword>
<keyword id="KW-0472">Membrane</keyword>
<keyword id="KW-0547">Nucleotide-binding</keyword>
<keyword id="KW-1185">Reference proteome</keyword>
<keyword id="KW-1278">Translocase</keyword>
<keyword id="KW-0813">Transport</keyword>
<name>ATPA_LEUCK</name>
<sequence length="504" mass="54553">MAIQAEEISALIKQQLEKFDTTLTVEEVGTVTYIGDGVARATGLANAMAGELLEFANGTFGMAQNLESSEVGIIILGGFDDIREGDTVKRTGRIMEVPVGEQLIGRVVNALGQPIDGLGEIKTDKFRPVEVKAPGVMQRKSVFEPLQTGIKAIDALVPIGRGQRELIIGDRKTGKTSLAIDTILNQKDQNMIVIYVAIGQKDSTVRTQVETLRQMGAMDYTIVVNAGPSEPAPMLYLAPYVGAAMGEEFMYNGKHVLIVYDDLSKQATAYRELSLILRRPPGREAYPGDVFYLHSRLLERAAKLSDELGGGSMTALPIIETQAGDVSAYIPTNVISITDGQVFLDADQFYAGVRPAIDAGTSVSRVGGDAQIKAMKKVAGTLRLDLASFRELESFAQFGSDLDAATQAKLARGRRTVEVLKQPLHKPMPVQHQVIVLYALTHGYIDDIAVEDIQRFQDELIAYVDANANDLFKVIIDTKQLPEESAMNAAIEAFKAGFAGSAAE</sequence>
<evidence type="ECO:0000255" key="1">
    <source>
        <dbReference type="HAMAP-Rule" id="MF_01346"/>
    </source>
</evidence>
<feature type="chain" id="PRO_1000143403" description="ATP synthase subunit alpha">
    <location>
        <begin position="1"/>
        <end position="504"/>
    </location>
</feature>
<feature type="binding site" evidence="1">
    <location>
        <begin position="169"/>
        <end position="176"/>
    </location>
    <ligand>
        <name>ATP</name>
        <dbReference type="ChEBI" id="CHEBI:30616"/>
    </ligand>
</feature>
<feature type="site" description="Required for activity" evidence="1">
    <location>
        <position position="362"/>
    </location>
</feature>
<accession>B1MW87</accession>
<reference key="1">
    <citation type="journal article" date="2008" name="J. Bacteriol.">
        <title>Complete genome sequence of Leuconostoc citreum KM20.</title>
        <authorList>
            <person name="Kim J.F."/>
            <person name="Jeong H."/>
            <person name="Lee J.-S."/>
            <person name="Choi S.-H."/>
            <person name="Ha M."/>
            <person name="Hur C.-G."/>
            <person name="Kim J.-S."/>
            <person name="Lee S."/>
            <person name="Park H.-S."/>
            <person name="Park Y.-H."/>
            <person name="Oh T.K."/>
        </authorList>
    </citation>
    <scope>NUCLEOTIDE SEQUENCE [LARGE SCALE GENOMIC DNA]</scope>
    <source>
        <strain>KM20</strain>
    </source>
</reference>